<feature type="chain" id="PRO_1000077465" description="Protease HtpX homolog">
    <location>
        <begin position="1"/>
        <end position="294"/>
    </location>
</feature>
<feature type="transmembrane region" description="Helical" evidence="1">
    <location>
        <begin position="12"/>
        <end position="32"/>
    </location>
</feature>
<feature type="transmembrane region" description="Helical" evidence="1">
    <location>
        <begin position="34"/>
        <end position="54"/>
    </location>
</feature>
<feature type="transmembrane region" description="Helical" evidence="1">
    <location>
        <begin position="152"/>
        <end position="172"/>
    </location>
</feature>
<feature type="transmembrane region" description="Helical" evidence="1">
    <location>
        <begin position="188"/>
        <end position="208"/>
    </location>
</feature>
<feature type="active site" evidence="1">
    <location>
        <position position="139"/>
    </location>
</feature>
<feature type="binding site" evidence="1">
    <location>
        <position position="138"/>
    </location>
    <ligand>
        <name>Zn(2+)</name>
        <dbReference type="ChEBI" id="CHEBI:29105"/>
        <note>catalytic</note>
    </ligand>
</feature>
<feature type="binding site" evidence="1">
    <location>
        <position position="142"/>
    </location>
    <ligand>
        <name>Zn(2+)</name>
        <dbReference type="ChEBI" id="CHEBI:29105"/>
        <note>catalytic</note>
    </ligand>
</feature>
<feature type="binding site" evidence="1">
    <location>
        <position position="213"/>
    </location>
    <ligand>
        <name>Zn(2+)</name>
        <dbReference type="ChEBI" id="CHEBI:29105"/>
        <note>catalytic</note>
    </ligand>
</feature>
<name>HTPX_KINRD</name>
<sequence>MHRHHNGLKTAVLFGGIWGVLLLIGAFLASSFRSPGVLLVFVVIGLATSAYSYWNSAGLALRAMRARPVSEAEQPGMHRIVRELSTAARQPMPQLYVSPTMAPNAFATGRNPENAAVCCTEGILQLLDERELRGVLGHELMHVYNRDILTSSVAGALAGVITSIAQFGVFFGSALGGGRDGEERANPLALLLLSLMAPLAASVIQLAISRTREYDADEDGARLTGDPLALASALRKLELGTRQLPLPPERELVNSSHMMIANPFRGQGVARLFSTHPPMAERIARLEALAGYRR</sequence>
<organism>
    <name type="scientific">Kineococcus radiotolerans (strain ATCC BAA-149 / DSM 14245 / SRS30216)</name>
    <dbReference type="NCBI Taxonomy" id="266940"/>
    <lineage>
        <taxon>Bacteria</taxon>
        <taxon>Bacillati</taxon>
        <taxon>Actinomycetota</taxon>
        <taxon>Actinomycetes</taxon>
        <taxon>Kineosporiales</taxon>
        <taxon>Kineosporiaceae</taxon>
        <taxon>Kineococcus</taxon>
    </lineage>
</organism>
<dbReference type="EC" id="3.4.24.-" evidence="1"/>
<dbReference type="EMBL" id="CP000750">
    <property type="protein sequence ID" value="ABS02149.1"/>
    <property type="molecule type" value="Genomic_DNA"/>
</dbReference>
<dbReference type="RefSeq" id="WP_012085009.1">
    <property type="nucleotide sequence ID" value="NC_009664.2"/>
</dbReference>
<dbReference type="STRING" id="266940.Krad_0660"/>
<dbReference type="KEGG" id="kra:Krad_0660"/>
<dbReference type="eggNOG" id="COG0501">
    <property type="taxonomic scope" value="Bacteria"/>
</dbReference>
<dbReference type="HOGENOM" id="CLU_042266_3_1_11"/>
<dbReference type="OrthoDB" id="15218at2"/>
<dbReference type="Proteomes" id="UP000001116">
    <property type="component" value="Chromosome"/>
</dbReference>
<dbReference type="GO" id="GO:0005886">
    <property type="term" value="C:plasma membrane"/>
    <property type="evidence" value="ECO:0007669"/>
    <property type="project" value="UniProtKB-SubCell"/>
</dbReference>
<dbReference type="GO" id="GO:0004222">
    <property type="term" value="F:metalloendopeptidase activity"/>
    <property type="evidence" value="ECO:0007669"/>
    <property type="project" value="UniProtKB-UniRule"/>
</dbReference>
<dbReference type="GO" id="GO:0008270">
    <property type="term" value="F:zinc ion binding"/>
    <property type="evidence" value="ECO:0007669"/>
    <property type="project" value="UniProtKB-UniRule"/>
</dbReference>
<dbReference type="GO" id="GO:0006508">
    <property type="term" value="P:proteolysis"/>
    <property type="evidence" value="ECO:0007669"/>
    <property type="project" value="UniProtKB-KW"/>
</dbReference>
<dbReference type="Gene3D" id="3.30.2010.10">
    <property type="entry name" value="Metalloproteases ('zincins'), catalytic domain"/>
    <property type="match status" value="1"/>
</dbReference>
<dbReference type="HAMAP" id="MF_00188">
    <property type="entry name" value="Pept_M48_protease_HtpX"/>
    <property type="match status" value="1"/>
</dbReference>
<dbReference type="InterPro" id="IPR050083">
    <property type="entry name" value="HtpX_protease"/>
</dbReference>
<dbReference type="InterPro" id="IPR022919">
    <property type="entry name" value="Pept_M48_protease_HtpX"/>
</dbReference>
<dbReference type="InterPro" id="IPR001915">
    <property type="entry name" value="Peptidase_M48"/>
</dbReference>
<dbReference type="NCBIfam" id="NF002839">
    <property type="entry name" value="PRK03072.1"/>
    <property type="match status" value="1"/>
</dbReference>
<dbReference type="PANTHER" id="PTHR43221">
    <property type="entry name" value="PROTEASE HTPX"/>
    <property type="match status" value="1"/>
</dbReference>
<dbReference type="PANTHER" id="PTHR43221:SF1">
    <property type="entry name" value="PROTEASE HTPX"/>
    <property type="match status" value="1"/>
</dbReference>
<dbReference type="Pfam" id="PF01435">
    <property type="entry name" value="Peptidase_M48"/>
    <property type="match status" value="1"/>
</dbReference>
<dbReference type="PROSITE" id="PS00142">
    <property type="entry name" value="ZINC_PROTEASE"/>
    <property type="match status" value="1"/>
</dbReference>
<accession>A6W5R0</accession>
<reference key="1">
    <citation type="journal article" date="2008" name="PLoS ONE">
        <title>Survival in nuclear waste, extreme resistance, and potential applications gleaned from the genome sequence of Kineococcus radiotolerans SRS30216.</title>
        <authorList>
            <person name="Bagwell C.E."/>
            <person name="Bhat S."/>
            <person name="Hawkins G.M."/>
            <person name="Smith B.W."/>
            <person name="Biswas T."/>
            <person name="Hoover T.R."/>
            <person name="Saunders E."/>
            <person name="Han C.S."/>
            <person name="Tsodikov O.V."/>
            <person name="Shimkets L.J."/>
        </authorList>
    </citation>
    <scope>NUCLEOTIDE SEQUENCE [LARGE SCALE GENOMIC DNA]</scope>
    <source>
        <strain>ATCC BAA-149 / DSM 14245 / SRS30216</strain>
    </source>
</reference>
<comment type="cofactor">
    <cofactor evidence="1">
        <name>Zn(2+)</name>
        <dbReference type="ChEBI" id="CHEBI:29105"/>
    </cofactor>
    <text evidence="1">Binds 1 zinc ion per subunit.</text>
</comment>
<comment type="subcellular location">
    <subcellularLocation>
        <location evidence="1">Cell membrane</location>
        <topology evidence="1">Multi-pass membrane protein</topology>
    </subcellularLocation>
</comment>
<comment type="similarity">
    <text evidence="1">Belongs to the peptidase M48B family.</text>
</comment>
<gene>
    <name evidence="1" type="primary">htpX</name>
    <name type="ordered locus">Krad_0660</name>
</gene>
<evidence type="ECO:0000255" key="1">
    <source>
        <dbReference type="HAMAP-Rule" id="MF_00188"/>
    </source>
</evidence>
<proteinExistence type="inferred from homology"/>
<protein>
    <recommendedName>
        <fullName evidence="1">Protease HtpX homolog</fullName>
        <ecNumber evidence="1">3.4.24.-</ecNumber>
    </recommendedName>
</protein>
<keyword id="KW-1003">Cell membrane</keyword>
<keyword id="KW-0378">Hydrolase</keyword>
<keyword id="KW-0472">Membrane</keyword>
<keyword id="KW-0479">Metal-binding</keyword>
<keyword id="KW-0482">Metalloprotease</keyword>
<keyword id="KW-0645">Protease</keyword>
<keyword id="KW-1185">Reference proteome</keyword>
<keyword id="KW-0812">Transmembrane</keyword>
<keyword id="KW-1133">Transmembrane helix</keyword>
<keyword id="KW-0862">Zinc</keyword>